<feature type="chain" id="PRO_1000198889" description="Arginine--tRNA ligase">
    <location>
        <begin position="1"/>
        <end position="553"/>
    </location>
</feature>
<feature type="short sequence motif" description="'HIGH' region">
    <location>
        <begin position="130"/>
        <end position="140"/>
    </location>
</feature>
<sequence length="553" mass="59394">MNPEDLSVLIKNTAAAVLTEHELDASVLPETVTVERPRNPEHGDYATNLALQVAKKAGAQPRELAQWLADALAGNDAIDEASIAGPGFLNIRLAAAAQGAIVAQVLNAGADFGSNTTYQGKKINLEFVSANPTGPIHLGGTRWAAVGDSLGRVLEASGAEVTREYYFNDHGGQIDRFARSLVAAAKGEPTPEDGYGGGYIKEIAQGVLEQNPGALDGSDAEVQEAFRSAGVEMMFAQIKESLHEFGVDFDVYFHENSLFESGAVEKSIQKLKDNGKLYEAEGAWWLKSTEYGDDKDRVVIKSDGNAAYIAGDIAYVADKFDRGHDLAIYMLGADHHGYIARLRASAQALGYDPDAVEVLIGQMVNLVRDGKAVKMSKRAGTVITLDDLVEAIGVDGARYSLVRSSVDSSLDIDLGLWASQSADNPVYYVQYGHARICSILRKAAELGFDTAALADAPLDLLTHDKEGDLIRTLGEFPEVVATAATLREPHRIARYAEELAAVFHRFYDQCQVLPKAGEETEPIHSARLALASATRQVMSNALTTVGVSAPEKM</sequence>
<comment type="catalytic activity">
    <reaction evidence="1">
        <text>tRNA(Arg) + L-arginine + ATP = L-arginyl-tRNA(Arg) + AMP + diphosphate</text>
        <dbReference type="Rhea" id="RHEA:20301"/>
        <dbReference type="Rhea" id="RHEA-COMP:9658"/>
        <dbReference type="Rhea" id="RHEA-COMP:9673"/>
        <dbReference type="ChEBI" id="CHEBI:30616"/>
        <dbReference type="ChEBI" id="CHEBI:32682"/>
        <dbReference type="ChEBI" id="CHEBI:33019"/>
        <dbReference type="ChEBI" id="CHEBI:78442"/>
        <dbReference type="ChEBI" id="CHEBI:78513"/>
        <dbReference type="ChEBI" id="CHEBI:456215"/>
        <dbReference type="EC" id="6.1.1.19"/>
    </reaction>
</comment>
<comment type="subunit">
    <text evidence="1">Monomer.</text>
</comment>
<comment type="subcellular location">
    <subcellularLocation>
        <location evidence="1">Cytoplasm</location>
    </subcellularLocation>
</comment>
<comment type="similarity">
    <text evidence="1">Belongs to the class-I aminoacyl-tRNA synthetase family.</text>
</comment>
<organism>
    <name type="scientific">Corynebacterium aurimucosum (strain ATCC 700975 / DSM 44827 / CIP 107346 / CN-1)</name>
    <name type="common">Corynebacterium nigricans</name>
    <dbReference type="NCBI Taxonomy" id="548476"/>
    <lineage>
        <taxon>Bacteria</taxon>
        <taxon>Bacillati</taxon>
        <taxon>Actinomycetota</taxon>
        <taxon>Actinomycetes</taxon>
        <taxon>Mycobacteriales</taxon>
        <taxon>Corynebacteriaceae</taxon>
        <taxon>Corynebacterium</taxon>
    </lineage>
</organism>
<proteinExistence type="inferred from homology"/>
<keyword id="KW-0030">Aminoacyl-tRNA synthetase</keyword>
<keyword id="KW-0067">ATP-binding</keyword>
<keyword id="KW-0963">Cytoplasm</keyword>
<keyword id="KW-0436">Ligase</keyword>
<keyword id="KW-0547">Nucleotide-binding</keyword>
<keyword id="KW-0648">Protein biosynthesis</keyword>
<keyword id="KW-1185">Reference proteome</keyword>
<dbReference type="EC" id="6.1.1.19" evidence="1"/>
<dbReference type="EMBL" id="CP001601">
    <property type="protein sequence ID" value="ACP32642.1"/>
    <property type="molecule type" value="Genomic_DNA"/>
</dbReference>
<dbReference type="RefSeq" id="WP_010187121.1">
    <property type="nucleotide sequence ID" value="NC_012590.1"/>
</dbReference>
<dbReference type="SMR" id="C3PFN8"/>
<dbReference type="STRING" id="548476.cauri_1047"/>
<dbReference type="GeneID" id="31923669"/>
<dbReference type="KEGG" id="car:cauri_1047"/>
<dbReference type="eggNOG" id="COG0018">
    <property type="taxonomic scope" value="Bacteria"/>
</dbReference>
<dbReference type="HOGENOM" id="CLU_006406_0_1_11"/>
<dbReference type="OrthoDB" id="9803211at2"/>
<dbReference type="Proteomes" id="UP000002077">
    <property type="component" value="Chromosome"/>
</dbReference>
<dbReference type="GO" id="GO:0005737">
    <property type="term" value="C:cytoplasm"/>
    <property type="evidence" value="ECO:0007669"/>
    <property type="project" value="UniProtKB-SubCell"/>
</dbReference>
<dbReference type="GO" id="GO:0004814">
    <property type="term" value="F:arginine-tRNA ligase activity"/>
    <property type="evidence" value="ECO:0007669"/>
    <property type="project" value="UniProtKB-UniRule"/>
</dbReference>
<dbReference type="GO" id="GO:0005524">
    <property type="term" value="F:ATP binding"/>
    <property type="evidence" value="ECO:0007669"/>
    <property type="project" value="UniProtKB-UniRule"/>
</dbReference>
<dbReference type="GO" id="GO:0006420">
    <property type="term" value="P:arginyl-tRNA aminoacylation"/>
    <property type="evidence" value="ECO:0007669"/>
    <property type="project" value="UniProtKB-UniRule"/>
</dbReference>
<dbReference type="CDD" id="cd07956">
    <property type="entry name" value="Anticodon_Ia_Arg"/>
    <property type="match status" value="1"/>
</dbReference>
<dbReference type="CDD" id="cd00671">
    <property type="entry name" value="ArgRS_core"/>
    <property type="match status" value="1"/>
</dbReference>
<dbReference type="FunFam" id="1.10.730.10:FF:000008">
    <property type="entry name" value="Arginine--tRNA ligase"/>
    <property type="match status" value="1"/>
</dbReference>
<dbReference type="FunFam" id="3.40.50.620:FF:000062">
    <property type="entry name" value="Arginine--tRNA ligase"/>
    <property type="match status" value="1"/>
</dbReference>
<dbReference type="Gene3D" id="3.30.1360.70">
    <property type="entry name" value="Arginyl tRNA synthetase N-terminal domain"/>
    <property type="match status" value="1"/>
</dbReference>
<dbReference type="Gene3D" id="3.40.50.620">
    <property type="entry name" value="HUPs"/>
    <property type="match status" value="1"/>
</dbReference>
<dbReference type="Gene3D" id="1.10.730.10">
    <property type="entry name" value="Isoleucyl-tRNA Synthetase, Domain 1"/>
    <property type="match status" value="1"/>
</dbReference>
<dbReference type="HAMAP" id="MF_00123">
    <property type="entry name" value="Arg_tRNA_synth"/>
    <property type="match status" value="1"/>
</dbReference>
<dbReference type="InterPro" id="IPR001412">
    <property type="entry name" value="aa-tRNA-synth_I_CS"/>
</dbReference>
<dbReference type="InterPro" id="IPR001278">
    <property type="entry name" value="Arg-tRNA-ligase"/>
</dbReference>
<dbReference type="InterPro" id="IPR005148">
    <property type="entry name" value="Arg-tRNA-synth_N"/>
</dbReference>
<dbReference type="InterPro" id="IPR036695">
    <property type="entry name" value="Arg-tRNA-synth_N_sf"/>
</dbReference>
<dbReference type="InterPro" id="IPR035684">
    <property type="entry name" value="ArgRS_core"/>
</dbReference>
<dbReference type="InterPro" id="IPR008909">
    <property type="entry name" value="DALR_anticod-bd"/>
</dbReference>
<dbReference type="InterPro" id="IPR014729">
    <property type="entry name" value="Rossmann-like_a/b/a_fold"/>
</dbReference>
<dbReference type="InterPro" id="IPR009080">
    <property type="entry name" value="tRNAsynth_Ia_anticodon-bd"/>
</dbReference>
<dbReference type="NCBIfam" id="TIGR00456">
    <property type="entry name" value="argS"/>
    <property type="match status" value="1"/>
</dbReference>
<dbReference type="PANTHER" id="PTHR11956:SF5">
    <property type="entry name" value="ARGININE--TRNA LIGASE, CYTOPLASMIC"/>
    <property type="match status" value="1"/>
</dbReference>
<dbReference type="PANTHER" id="PTHR11956">
    <property type="entry name" value="ARGINYL-TRNA SYNTHETASE"/>
    <property type="match status" value="1"/>
</dbReference>
<dbReference type="Pfam" id="PF03485">
    <property type="entry name" value="Arg_tRNA_synt_N"/>
    <property type="match status" value="1"/>
</dbReference>
<dbReference type="Pfam" id="PF05746">
    <property type="entry name" value="DALR_1"/>
    <property type="match status" value="1"/>
</dbReference>
<dbReference type="Pfam" id="PF00750">
    <property type="entry name" value="tRNA-synt_1d"/>
    <property type="match status" value="2"/>
</dbReference>
<dbReference type="PRINTS" id="PR01038">
    <property type="entry name" value="TRNASYNTHARG"/>
</dbReference>
<dbReference type="SMART" id="SM01016">
    <property type="entry name" value="Arg_tRNA_synt_N"/>
    <property type="match status" value="1"/>
</dbReference>
<dbReference type="SMART" id="SM00836">
    <property type="entry name" value="DALR_1"/>
    <property type="match status" value="1"/>
</dbReference>
<dbReference type="SUPFAM" id="SSF47323">
    <property type="entry name" value="Anticodon-binding domain of a subclass of class I aminoacyl-tRNA synthetases"/>
    <property type="match status" value="1"/>
</dbReference>
<dbReference type="SUPFAM" id="SSF55190">
    <property type="entry name" value="Arginyl-tRNA synthetase (ArgRS), N-terminal 'additional' domain"/>
    <property type="match status" value="1"/>
</dbReference>
<dbReference type="SUPFAM" id="SSF52374">
    <property type="entry name" value="Nucleotidylyl transferase"/>
    <property type="match status" value="1"/>
</dbReference>
<dbReference type="PROSITE" id="PS00178">
    <property type="entry name" value="AA_TRNA_LIGASE_I"/>
    <property type="match status" value="1"/>
</dbReference>
<protein>
    <recommendedName>
        <fullName evidence="1">Arginine--tRNA ligase</fullName>
        <ecNumber evidence="1">6.1.1.19</ecNumber>
    </recommendedName>
    <alternativeName>
        <fullName evidence="1">Arginyl-tRNA synthetase</fullName>
        <shortName evidence="1">ArgRS</shortName>
    </alternativeName>
</protein>
<evidence type="ECO:0000255" key="1">
    <source>
        <dbReference type="HAMAP-Rule" id="MF_00123"/>
    </source>
</evidence>
<gene>
    <name evidence="1" type="primary">argS</name>
    <name type="ordered locus">cauri_1047</name>
</gene>
<accession>C3PFN8</accession>
<name>SYR_CORA7</name>
<reference key="1">
    <citation type="journal article" date="2010" name="BMC Genomics">
        <title>Complete genome sequence and lifestyle of black-pigmented Corynebacterium aurimucosum ATCC 700975 (formerly C. nigricans CN-1) isolated from a vaginal swab of a woman with spontaneous abortion.</title>
        <authorList>
            <person name="Trost E."/>
            <person name="Gotker S."/>
            <person name="Schneider J."/>
            <person name="Schneiker-Bekel S."/>
            <person name="Szczepanowski R."/>
            <person name="Tilker A."/>
            <person name="Viehoever P."/>
            <person name="Arnold W."/>
            <person name="Bekel T."/>
            <person name="Blom J."/>
            <person name="Gartemann K.H."/>
            <person name="Linke B."/>
            <person name="Goesmann A."/>
            <person name="Puhler A."/>
            <person name="Shukla S.K."/>
            <person name="Tauch A."/>
        </authorList>
    </citation>
    <scope>NUCLEOTIDE SEQUENCE [LARGE SCALE GENOMIC DNA]</scope>
    <source>
        <strain>ATCC 700975 / DSM 44827 / CIP 107346 / CN-1</strain>
    </source>
</reference>